<organism>
    <name type="scientific">Treponema denticola (strain ATCC 35405 / DSM 14222 / CIP 103919 / JCM 8153 / KCTC 15104)</name>
    <dbReference type="NCBI Taxonomy" id="243275"/>
    <lineage>
        <taxon>Bacteria</taxon>
        <taxon>Pseudomonadati</taxon>
        <taxon>Spirochaetota</taxon>
        <taxon>Spirochaetia</taxon>
        <taxon>Spirochaetales</taxon>
        <taxon>Treponemataceae</taxon>
        <taxon>Treponema</taxon>
    </lineage>
</organism>
<keyword id="KW-1185">Reference proteome</keyword>
<keyword id="KW-0687">Ribonucleoprotein</keyword>
<keyword id="KW-0689">Ribosomal protein</keyword>
<name>RL33_TREDE</name>
<accession>Q73JJ0</accession>
<sequence>MAKKTAVELIALQCSECKRRNYTTSKNRKNIQGKLELMKYCSFDRKHTLHKETKIK</sequence>
<protein>
    <recommendedName>
        <fullName evidence="1">Large ribosomal subunit protein bL33</fullName>
    </recommendedName>
    <alternativeName>
        <fullName evidence="2">50S ribosomal protein L33</fullName>
    </alternativeName>
</protein>
<gene>
    <name evidence="1" type="primary">rpmG</name>
    <name type="ordered locus">TDE_2428</name>
</gene>
<evidence type="ECO:0000255" key="1">
    <source>
        <dbReference type="HAMAP-Rule" id="MF_00294"/>
    </source>
</evidence>
<evidence type="ECO:0000305" key="2"/>
<reference key="1">
    <citation type="journal article" date="2004" name="Proc. Natl. Acad. Sci. U.S.A.">
        <title>Comparison of the genome of the oral pathogen Treponema denticola with other spirochete genomes.</title>
        <authorList>
            <person name="Seshadri R."/>
            <person name="Myers G.S.A."/>
            <person name="Tettelin H."/>
            <person name="Eisen J.A."/>
            <person name="Heidelberg J.F."/>
            <person name="Dodson R.J."/>
            <person name="Davidsen T.M."/>
            <person name="DeBoy R.T."/>
            <person name="Fouts D.E."/>
            <person name="Haft D.H."/>
            <person name="Selengut J."/>
            <person name="Ren Q."/>
            <person name="Brinkac L.M."/>
            <person name="Madupu R."/>
            <person name="Kolonay J.F."/>
            <person name="Durkin S.A."/>
            <person name="Daugherty S.C."/>
            <person name="Shetty J."/>
            <person name="Shvartsbeyn A."/>
            <person name="Gebregeorgis E."/>
            <person name="Geer K."/>
            <person name="Tsegaye G."/>
            <person name="Malek J.A."/>
            <person name="Ayodeji B."/>
            <person name="Shatsman S."/>
            <person name="McLeod M.P."/>
            <person name="Smajs D."/>
            <person name="Howell J.K."/>
            <person name="Pal S."/>
            <person name="Amin A."/>
            <person name="Vashisth P."/>
            <person name="McNeill T.Z."/>
            <person name="Xiang Q."/>
            <person name="Sodergren E."/>
            <person name="Baca E."/>
            <person name="Weinstock G.M."/>
            <person name="Norris S.J."/>
            <person name="Fraser C.M."/>
            <person name="Paulsen I.T."/>
        </authorList>
    </citation>
    <scope>NUCLEOTIDE SEQUENCE [LARGE SCALE GENOMIC DNA]</scope>
    <source>
        <strain>ATCC 35405 / DSM 14222 / CIP 103919 / JCM 8153 / KCTC 15104</strain>
    </source>
</reference>
<feature type="chain" id="PRO_0000356769" description="Large ribosomal subunit protein bL33">
    <location>
        <begin position="1"/>
        <end position="56"/>
    </location>
</feature>
<dbReference type="EMBL" id="AE017226">
    <property type="protein sequence ID" value="AAS12946.1"/>
    <property type="molecule type" value="Genomic_DNA"/>
</dbReference>
<dbReference type="RefSeq" id="NP_973027.1">
    <property type="nucleotide sequence ID" value="NC_002967.9"/>
</dbReference>
<dbReference type="RefSeq" id="WP_002667594.1">
    <property type="nucleotide sequence ID" value="NC_002967.9"/>
</dbReference>
<dbReference type="SMR" id="Q73JJ0"/>
<dbReference type="STRING" id="243275.TDE_2428"/>
<dbReference type="PaxDb" id="243275-TDE_2428"/>
<dbReference type="GeneID" id="2739853"/>
<dbReference type="KEGG" id="tde:TDE_2428"/>
<dbReference type="PATRIC" id="fig|243275.7.peg.2295"/>
<dbReference type="eggNOG" id="COG0267">
    <property type="taxonomic scope" value="Bacteria"/>
</dbReference>
<dbReference type="HOGENOM" id="CLU_190949_0_2_12"/>
<dbReference type="OrthoDB" id="9801333at2"/>
<dbReference type="Proteomes" id="UP000008212">
    <property type="component" value="Chromosome"/>
</dbReference>
<dbReference type="GO" id="GO:0005737">
    <property type="term" value="C:cytoplasm"/>
    <property type="evidence" value="ECO:0007669"/>
    <property type="project" value="UniProtKB-ARBA"/>
</dbReference>
<dbReference type="GO" id="GO:1990904">
    <property type="term" value="C:ribonucleoprotein complex"/>
    <property type="evidence" value="ECO:0007669"/>
    <property type="project" value="UniProtKB-KW"/>
</dbReference>
<dbReference type="GO" id="GO:0005840">
    <property type="term" value="C:ribosome"/>
    <property type="evidence" value="ECO:0007669"/>
    <property type="project" value="UniProtKB-KW"/>
</dbReference>
<dbReference type="GO" id="GO:0003735">
    <property type="term" value="F:structural constituent of ribosome"/>
    <property type="evidence" value="ECO:0007669"/>
    <property type="project" value="InterPro"/>
</dbReference>
<dbReference type="GO" id="GO:0006412">
    <property type="term" value="P:translation"/>
    <property type="evidence" value="ECO:0007669"/>
    <property type="project" value="UniProtKB-UniRule"/>
</dbReference>
<dbReference type="Gene3D" id="2.20.28.120">
    <property type="entry name" value="Ribosomal protein L33"/>
    <property type="match status" value="1"/>
</dbReference>
<dbReference type="HAMAP" id="MF_00294">
    <property type="entry name" value="Ribosomal_bL33"/>
    <property type="match status" value="1"/>
</dbReference>
<dbReference type="InterPro" id="IPR001705">
    <property type="entry name" value="Ribosomal_bL33"/>
</dbReference>
<dbReference type="InterPro" id="IPR018264">
    <property type="entry name" value="Ribosomal_bL33_CS"/>
</dbReference>
<dbReference type="InterPro" id="IPR038584">
    <property type="entry name" value="Ribosomal_bL33_sf"/>
</dbReference>
<dbReference type="InterPro" id="IPR011332">
    <property type="entry name" value="Ribosomal_zn-bd"/>
</dbReference>
<dbReference type="NCBIfam" id="NF001764">
    <property type="entry name" value="PRK00504.1"/>
    <property type="match status" value="1"/>
</dbReference>
<dbReference type="NCBIfam" id="NF001860">
    <property type="entry name" value="PRK00595.1"/>
    <property type="match status" value="1"/>
</dbReference>
<dbReference type="NCBIfam" id="TIGR01023">
    <property type="entry name" value="rpmG_bact"/>
    <property type="match status" value="1"/>
</dbReference>
<dbReference type="PANTHER" id="PTHR43168">
    <property type="entry name" value="50S RIBOSOMAL PROTEIN L33, CHLOROPLASTIC"/>
    <property type="match status" value="1"/>
</dbReference>
<dbReference type="PANTHER" id="PTHR43168:SF2">
    <property type="entry name" value="LARGE RIBOSOMAL SUBUNIT PROTEIN BL33C"/>
    <property type="match status" value="1"/>
</dbReference>
<dbReference type="Pfam" id="PF00471">
    <property type="entry name" value="Ribosomal_L33"/>
    <property type="match status" value="1"/>
</dbReference>
<dbReference type="SUPFAM" id="SSF57829">
    <property type="entry name" value="Zn-binding ribosomal proteins"/>
    <property type="match status" value="1"/>
</dbReference>
<dbReference type="PROSITE" id="PS00582">
    <property type="entry name" value="RIBOSOMAL_L33"/>
    <property type="match status" value="1"/>
</dbReference>
<comment type="similarity">
    <text evidence="1">Belongs to the bacterial ribosomal protein bL33 family.</text>
</comment>
<proteinExistence type="inferred from homology"/>